<proteinExistence type="inferred from homology"/>
<sequence length="66" mass="6952">MGQKTALGSLLKAIGNSGQGKVVPGWGAVPVMTVIGLLLLVFLVILLQIYNQSLLLQGFSVDWNGN</sequence>
<keyword id="KW-0472">Membrane</keyword>
<keyword id="KW-0602">Photosynthesis</keyword>
<keyword id="KW-0604">Photosystem II</keyword>
<keyword id="KW-0793">Thylakoid</keyword>
<keyword id="KW-0812">Transmembrane</keyword>
<keyword id="KW-1133">Transmembrane helix</keyword>
<reference key="1">
    <citation type="journal article" date="2007" name="PLoS Genet.">
        <title>Patterns and implications of gene gain and loss in the evolution of Prochlorococcus.</title>
        <authorList>
            <person name="Kettler G.C."/>
            <person name="Martiny A.C."/>
            <person name="Huang K."/>
            <person name="Zucker J."/>
            <person name="Coleman M.L."/>
            <person name="Rodrigue S."/>
            <person name="Chen F."/>
            <person name="Lapidus A."/>
            <person name="Ferriera S."/>
            <person name="Johnson J."/>
            <person name="Steglich C."/>
            <person name="Church G.M."/>
            <person name="Richardson P."/>
            <person name="Chisholm S.W."/>
        </authorList>
    </citation>
    <scope>NUCLEOTIDE SEQUENCE [LARGE SCALE GENOMIC DNA]</scope>
    <source>
        <strain>MIT 9215</strain>
    </source>
</reference>
<feature type="chain" id="PRO_1000062190" description="Photosystem II reaction center protein H">
    <location>
        <begin position="1"/>
        <end position="66"/>
    </location>
</feature>
<feature type="transmembrane region" description="Helical" evidence="1">
    <location>
        <begin position="27"/>
        <end position="47"/>
    </location>
</feature>
<accession>A8G2R0</accession>
<gene>
    <name evidence="1" type="primary">psbH</name>
    <name type="ordered locus">P9215_02741</name>
</gene>
<evidence type="ECO:0000255" key="1">
    <source>
        <dbReference type="HAMAP-Rule" id="MF_00752"/>
    </source>
</evidence>
<evidence type="ECO:0000305" key="2"/>
<dbReference type="EMBL" id="CP000825">
    <property type="protein sequence ID" value="ABV49891.1"/>
    <property type="molecule type" value="Genomic_DNA"/>
</dbReference>
<dbReference type="RefSeq" id="WP_002805661.1">
    <property type="nucleotide sequence ID" value="NC_009840.1"/>
</dbReference>
<dbReference type="SMR" id="A8G2R0"/>
<dbReference type="STRING" id="93060.P9215_02741"/>
<dbReference type="KEGG" id="pmh:P9215_02741"/>
<dbReference type="eggNOG" id="ENOG50332MV">
    <property type="taxonomic scope" value="Bacteria"/>
</dbReference>
<dbReference type="HOGENOM" id="CLU_190203_0_0_3"/>
<dbReference type="OrthoDB" id="427121at2"/>
<dbReference type="Proteomes" id="UP000002014">
    <property type="component" value="Chromosome"/>
</dbReference>
<dbReference type="GO" id="GO:0009523">
    <property type="term" value="C:photosystem II"/>
    <property type="evidence" value="ECO:0007669"/>
    <property type="project" value="UniProtKB-KW"/>
</dbReference>
<dbReference type="GO" id="GO:0031676">
    <property type="term" value="C:plasma membrane-derived thylakoid membrane"/>
    <property type="evidence" value="ECO:0007669"/>
    <property type="project" value="UniProtKB-SubCell"/>
</dbReference>
<dbReference type="GO" id="GO:0042301">
    <property type="term" value="F:phosphate ion binding"/>
    <property type="evidence" value="ECO:0007669"/>
    <property type="project" value="InterPro"/>
</dbReference>
<dbReference type="GO" id="GO:0015979">
    <property type="term" value="P:photosynthesis"/>
    <property type="evidence" value="ECO:0007669"/>
    <property type="project" value="UniProtKB-UniRule"/>
</dbReference>
<dbReference type="GO" id="GO:0050821">
    <property type="term" value="P:protein stabilization"/>
    <property type="evidence" value="ECO:0007669"/>
    <property type="project" value="InterPro"/>
</dbReference>
<dbReference type="Gene3D" id="1.20.5.880">
    <property type="entry name" value="Photosystem II reaction center protein H"/>
    <property type="match status" value="1"/>
</dbReference>
<dbReference type="HAMAP" id="MF_00752">
    <property type="entry name" value="PSII_PsbH"/>
    <property type="match status" value="1"/>
</dbReference>
<dbReference type="InterPro" id="IPR001056">
    <property type="entry name" value="PSII_PsbH"/>
</dbReference>
<dbReference type="InterPro" id="IPR036863">
    <property type="entry name" value="PSII_PsbH_sf"/>
</dbReference>
<dbReference type="NCBIfam" id="NF002728">
    <property type="entry name" value="PRK02624.1"/>
    <property type="match status" value="1"/>
</dbReference>
<dbReference type="PANTHER" id="PTHR34469">
    <property type="entry name" value="PHOTOSYSTEM II REACTION CENTER PROTEIN H"/>
    <property type="match status" value="1"/>
</dbReference>
<dbReference type="PANTHER" id="PTHR34469:SF4">
    <property type="entry name" value="PHOTOSYSTEM II REACTION CENTER PROTEIN H"/>
    <property type="match status" value="1"/>
</dbReference>
<dbReference type="Pfam" id="PF00737">
    <property type="entry name" value="PsbH"/>
    <property type="match status" value="1"/>
</dbReference>
<dbReference type="SUPFAM" id="SSF161025">
    <property type="entry name" value="Photosystem II 10 kDa phosphoprotein PsbH"/>
    <property type="match status" value="1"/>
</dbReference>
<organism>
    <name type="scientific">Prochlorococcus marinus (strain MIT 9215)</name>
    <dbReference type="NCBI Taxonomy" id="93060"/>
    <lineage>
        <taxon>Bacteria</taxon>
        <taxon>Bacillati</taxon>
        <taxon>Cyanobacteriota</taxon>
        <taxon>Cyanophyceae</taxon>
        <taxon>Synechococcales</taxon>
        <taxon>Prochlorococcaceae</taxon>
        <taxon>Prochlorococcus</taxon>
    </lineage>
</organism>
<name>PSBH_PROM2</name>
<comment type="function">
    <text evidence="1">One of the components of the core complex of photosystem II (PSII), required for its stability and/or assembly. PSII is a light-driven water:plastoquinone oxidoreductase that uses light energy to abstract electrons from H(2)O, generating O(2) and a proton gradient subsequently used for ATP formation. It consists of a core antenna complex that captures photons, and an electron transfer chain that converts photonic excitation into a charge separation.</text>
</comment>
<comment type="subunit">
    <text evidence="2">PSII is composed of 1 copy each of membrane proteins PsbA, PsbB, PsbC, PsbD, PsbE, PsbF, PsbH, PsbI, PsbJ, PsbK, PsbL, PsbM, PsbT, PsbX, PsbY, Psb30/Ycf12, peripheral proteins PsbO, CyanoQ (PsbQ), PsbU, PsbV and a large number of cofactors. It forms dimeric complexes.</text>
</comment>
<comment type="subcellular location">
    <subcellularLocation>
        <location evidence="1">Cellular thylakoid membrane</location>
        <topology evidence="1">Single-pass membrane protein</topology>
    </subcellularLocation>
</comment>
<comment type="similarity">
    <text evidence="1">Belongs to the PsbH family.</text>
</comment>
<protein>
    <recommendedName>
        <fullName evidence="1">Photosystem II reaction center protein H</fullName>
        <shortName evidence="1">PSII-H</shortName>
    </recommendedName>
</protein>